<organism>
    <name type="scientific">Oryzias latipes</name>
    <name type="common">Japanese rice fish</name>
    <name type="synonym">Japanese killifish</name>
    <dbReference type="NCBI Taxonomy" id="8090"/>
    <lineage>
        <taxon>Eukaryota</taxon>
        <taxon>Metazoa</taxon>
        <taxon>Chordata</taxon>
        <taxon>Craniata</taxon>
        <taxon>Vertebrata</taxon>
        <taxon>Euteleostomi</taxon>
        <taxon>Actinopterygii</taxon>
        <taxon>Neopterygii</taxon>
        <taxon>Teleostei</taxon>
        <taxon>Neoteleostei</taxon>
        <taxon>Acanthomorphata</taxon>
        <taxon>Ovalentaria</taxon>
        <taxon>Atherinomorphae</taxon>
        <taxon>Beloniformes</taxon>
        <taxon>Adrianichthyidae</taxon>
        <taxon>Oryziinae</taxon>
        <taxon>Oryzias</taxon>
    </lineage>
</organism>
<gene>
    <name type="primary">six3</name>
</gene>
<name>SIX3_ORYLA</name>
<feature type="chain" id="PRO_0000049302" description="Homeobox protein SIX3">
    <location>
        <begin position="1"/>
        <end position="272"/>
    </location>
</feature>
<feature type="DNA-binding region" description="Homeobox" evidence="4">
    <location>
        <begin position="169"/>
        <end position="228"/>
    </location>
</feature>
<feature type="region of interest" description="Disordered" evidence="5">
    <location>
        <begin position="244"/>
        <end position="272"/>
    </location>
</feature>
<proteinExistence type="evidence at protein level"/>
<protein>
    <recommendedName>
        <fullName>Homeobox protein SIX3</fullName>
    </recommendedName>
    <alternativeName>
        <fullName>Sine oculis homeobox homolog 3</fullName>
    </alternativeName>
</protein>
<accession>O73916</accession>
<sequence>MVFRAPLDFISASRLLLPHFADAPPVLSRSRSPEHPPAGFLSLALPGLCFSATQIASVCETLEETGDIERLARFLWSLPVNTDGRDSISEHESVQRARAVVAFHTGCYRELYRILETHRFTRASHSKLQAMWLEAHYREAEKLRGRPLGPVDKYRVRKKFPLPRTIWDGEQKTHCFKERTRGLLREWYLQDPYPNPGKKRELAHATGLTPTQVGNWFKNRRQRDRAAAAKNRLQHHRICPDSACTLSGGDSSERADGDTFLSVTDSDSDLDV</sequence>
<reference key="1">
    <citation type="journal article" date="1998" name="Mech. Dev.">
        <title>Six3, a medaka homologue of the Drosophila homeobox gene sine oculis is expressed in the anterior embryonic shield and the developing eye.</title>
        <authorList>
            <person name="Loosli F."/>
            <person name="Koester R.W."/>
            <person name="Carl M."/>
            <person name="Krone A."/>
            <person name="Wittbrodt J."/>
        </authorList>
    </citation>
    <scope>NUCLEOTIDE SEQUENCE [MRNA]</scope>
    <source>
        <strain>Carolina Biological</strain>
    </source>
</reference>
<reference key="2">
    <citation type="journal article" date="2004" name="Nature">
        <title>Direct interaction of geminin and Six3 in eye development.</title>
        <authorList>
            <person name="Del Bene F."/>
            <person name="Tessmar-Raible K."/>
            <person name="Wittbrodt J."/>
        </authorList>
    </citation>
    <scope>INTERACTION WITH GMNN</scope>
</reference>
<keyword id="KW-0217">Developmental protein</keyword>
<keyword id="KW-0238">DNA-binding</keyword>
<keyword id="KW-0371">Homeobox</keyword>
<keyword id="KW-0539">Nucleus</keyword>
<keyword id="KW-1185">Reference proteome</keyword>
<keyword id="KW-0678">Repressor</keyword>
<keyword id="KW-0804">Transcription</keyword>
<keyword id="KW-0805">Transcription regulation</keyword>
<dbReference type="EMBL" id="AJ000937">
    <property type="protein sequence ID" value="CAA04394.1"/>
    <property type="molecule type" value="mRNA"/>
</dbReference>
<dbReference type="RefSeq" id="NP_001098230.1">
    <property type="nucleotide sequence ID" value="NM_001104760.1"/>
</dbReference>
<dbReference type="SMR" id="O73916"/>
<dbReference type="STRING" id="8090.ENSORLP00000012924"/>
<dbReference type="GeneID" id="100049355"/>
<dbReference type="KEGG" id="ola:100049355"/>
<dbReference type="CTD" id="30636"/>
<dbReference type="eggNOG" id="KOG0775">
    <property type="taxonomic scope" value="Eukaryota"/>
</dbReference>
<dbReference type="InParanoid" id="O73916"/>
<dbReference type="OrthoDB" id="3501850at2759"/>
<dbReference type="Proteomes" id="UP000001038">
    <property type="component" value="Unplaced"/>
</dbReference>
<dbReference type="Proteomes" id="UP000265180">
    <property type="component" value="Chromosome 9"/>
</dbReference>
<dbReference type="Proteomes" id="UP000265200">
    <property type="component" value="Chromosome 9"/>
</dbReference>
<dbReference type="GO" id="GO:0005634">
    <property type="term" value="C:nucleus"/>
    <property type="evidence" value="ECO:0000318"/>
    <property type="project" value="GO_Central"/>
</dbReference>
<dbReference type="GO" id="GO:0005667">
    <property type="term" value="C:transcription regulator complex"/>
    <property type="evidence" value="ECO:0000318"/>
    <property type="project" value="GO_Central"/>
</dbReference>
<dbReference type="GO" id="GO:0001228">
    <property type="term" value="F:DNA-binding transcription activator activity, RNA polymerase II-specific"/>
    <property type="evidence" value="ECO:0000250"/>
    <property type="project" value="UniProtKB"/>
</dbReference>
<dbReference type="GO" id="GO:0000981">
    <property type="term" value="F:DNA-binding transcription factor activity, RNA polymerase II-specific"/>
    <property type="evidence" value="ECO:0000318"/>
    <property type="project" value="GO_Central"/>
</dbReference>
<dbReference type="GO" id="GO:0000978">
    <property type="term" value="F:RNA polymerase II cis-regulatory region sequence-specific DNA binding"/>
    <property type="evidence" value="ECO:0000318"/>
    <property type="project" value="GO_Central"/>
</dbReference>
<dbReference type="GO" id="GO:0001222">
    <property type="term" value="F:transcription corepressor binding"/>
    <property type="evidence" value="ECO:0000353"/>
    <property type="project" value="UniProtKB"/>
</dbReference>
<dbReference type="GO" id="GO:1902742">
    <property type="term" value="P:apoptotic process involved in development"/>
    <property type="evidence" value="ECO:0000250"/>
    <property type="project" value="UniProtKB"/>
</dbReference>
<dbReference type="GO" id="GO:0021846">
    <property type="term" value="P:cell proliferation in forebrain"/>
    <property type="evidence" value="ECO:0000250"/>
    <property type="project" value="UniProtKB"/>
</dbReference>
<dbReference type="GO" id="GO:0002070">
    <property type="term" value="P:epithelial cell maturation"/>
    <property type="evidence" value="ECO:0000250"/>
    <property type="project" value="UniProtKB"/>
</dbReference>
<dbReference type="GO" id="GO:0001654">
    <property type="term" value="P:eye development"/>
    <property type="evidence" value="ECO:0000250"/>
    <property type="project" value="UniProtKB"/>
</dbReference>
<dbReference type="GO" id="GO:0021798">
    <property type="term" value="P:forebrain dorsal/ventral pattern formation"/>
    <property type="evidence" value="ECO:0000250"/>
    <property type="project" value="UniProtKB"/>
</dbReference>
<dbReference type="GO" id="GO:0002088">
    <property type="term" value="P:lens development in camera-type eye"/>
    <property type="evidence" value="ECO:0000250"/>
    <property type="project" value="UniProtKB"/>
</dbReference>
<dbReference type="GO" id="GO:1990086">
    <property type="term" value="P:lens fiber cell apoptotic process"/>
    <property type="evidence" value="ECO:0000250"/>
    <property type="project" value="UniProtKB"/>
</dbReference>
<dbReference type="GO" id="GO:0070306">
    <property type="term" value="P:lens fiber cell differentiation"/>
    <property type="evidence" value="ECO:0000250"/>
    <property type="project" value="UniProtKB"/>
</dbReference>
<dbReference type="GO" id="GO:0045892">
    <property type="term" value="P:negative regulation of DNA-templated transcription"/>
    <property type="evidence" value="ECO:0000250"/>
    <property type="project" value="UniProtKB"/>
</dbReference>
<dbReference type="GO" id="GO:0045665">
    <property type="term" value="P:negative regulation of neuron differentiation"/>
    <property type="evidence" value="ECO:0000250"/>
    <property type="project" value="UniProtKB"/>
</dbReference>
<dbReference type="GO" id="GO:0014016">
    <property type="term" value="P:neuroblast differentiation"/>
    <property type="evidence" value="ECO:0000250"/>
    <property type="project" value="UniProtKB"/>
</dbReference>
<dbReference type="GO" id="GO:0097402">
    <property type="term" value="P:neuroblast migration"/>
    <property type="evidence" value="ECO:0000250"/>
    <property type="project" value="UniProtKB"/>
</dbReference>
<dbReference type="GO" id="GO:0003404">
    <property type="term" value="P:optic vesicle morphogenesis"/>
    <property type="evidence" value="ECO:0000250"/>
    <property type="project" value="UniProtKB"/>
</dbReference>
<dbReference type="GO" id="GO:0021983">
    <property type="term" value="P:pituitary gland development"/>
    <property type="evidence" value="ECO:0000250"/>
    <property type="project" value="UniProtKB"/>
</dbReference>
<dbReference type="GO" id="GO:0009946">
    <property type="term" value="P:proximal/distal axis specification"/>
    <property type="evidence" value="ECO:0000250"/>
    <property type="project" value="UniProtKB"/>
</dbReference>
<dbReference type="GO" id="GO:1901987">
    <property type="term" value="P:regulation of cell cycle phase transition"/>
    <property type="evidence" value="ECO:0000250"/>
    <property type="project" value="UniProtKB"/>
</dbReference>
<dbReference type="GO" id="GO:0042127">
    <property type="term" value="P:regulation of cell population proliferation"/>
    <property type="evidence" value="ECO:0000250"/>
    <property type="project" value="UniProtKB"/>
</dbReference>
<dbReference type="GO" id="GO:2000177">
    <property type="term" value="P:regulation of neural precursor cell proliferation"/>
    <property type="evidence" value="ECO:0000250"/>
    <property type="project" value="UniProtKB"/>
</dbReference>
<dbReference type="GO" id="GO:0061074">
    <property type="term" value="P:regulation of neural retina development"/>
    <property type="evidence" value="ECO:0000250"/>
    <property type="project" value="UniProtKB"/>
</dbReference>
<dbReference type="GO" id="GO:1902692">
    <property type="term" value="P:regulation of neuroblast proliferation"/>
    <property type="evidence" value="ECO:0000250"/>
    <property type="project" value="UniProtKB"/>
</dbReference>
<dbReference type="GO" id="GO:0006357">
    <property type="term" value="P:regulation of transcription by RNA polymerase II"/>
    <property type="evidence" value="ECO:0000318"/>
    <property type="project" value="GO_Central"/>
</dbReference>
<dbReference type="GO" id="GO:0021537">
    <property type="term" value="P:telencephalon development"/>
    <property type="evidence" value="ECO:0000250"/>
    <property type="project" value="UniProtKB"/>
</dbReference>
<dbReference type="GO" id="GO:0021978">
    <property type="term" value="P:telencephalon regionalization"/>
    <property type="evidence" value="ECO:0000250"/>
    <property type="project" value="UniProtKB"/>
</dbReference>
<dbReference type="CDD" id="cd00086">
    <property type="entry name" value="homeodomain"/>
    <property type="match status" value="1"/>
</dbReference>
<dbReference type="FunFam" id="1.10.10.60:FF:000046">
    <property type="entry name" value="SIX homeobox 3"/>
    <property type="match status" value="1"/>
</dbReference>
<dbReference type="Gene3D" id="1.10.10.60">
    <property type="entry name" value="Homeodomain-like"/>
    <property type="match status" value="1"/>
</dbReference>
<dbReference type="InterPro" id="IPR001356">
    <property type="entry name" value="HD"/>
</dbReference>
<dbReference type="InterPro" id="IPR009057">
    <property type="entry name" value="Homeodomain-like_sf"/>
</dbReference>
<dbReference type="InterPro" id="IPR031701">
    <property type="entry name" value="SIX1_SD"/>
</dbReference>
<dbReference type="PANTHER" id="PTHR10390">
    <property type="entry name" value="HOMEOBOX PROTEIN SIX"/>
    <property type="match status" value="1"/>
</dbReference>
<dbReference type="PANTHER" id="PTHR10390:SF12">
    <property type="entry name" value="HOMEOBOX PROTEIN SIX6"/>
    <property type="match status" value="1"/>
</dbReference>
<dbReference type="Pfam" id="PF00046">
    <property type="entry name" value="Homeodomain"/>
    <property type="match status" value="1"/>
</dbReference>
<dbReference type="Pfam" id="PF16878">
    <property type="entry name" value="SIX1_SD"/>
    <property type="match status" value="1"/>
</dbReference>
<dbReference type="SMART" id="SM00389">
    <property type="entry name" value="HOX"/>
    <property type="match status" value="1"/>
</dbReference>
<dbReference type="SUPFAM" id="SSF46689">
    <property type="entry name" value="Homeodomain-like"/>
    <property type="match status" value="1"/>
</dbReference>
<dbReference type="PROSITE" id="PS50071">
    <property type="entry name" value="HOMEOBOX_2"/>
    <property type="match status" value="1"/>
</dbReference>
<comment type="function">
    <text evidence="1 2 3">Transcriptional regulator which can act as both a transcriptional repressor and activator by binding a ATTA homeodomain core recognition sequence on these target genes. During forebrain development represses WNT1 expression allowing zona limitans intrathalamica formation and thereby ensuring proper anterio-posterior patterning of the diencephalon and formation of the rostral diencephalon. Acts as a direct upstream activator of SHH expression in the rostral diencephalon ventral midline and that in turn SHH maintains its expression. In addition, Six3 activity is required for the formation of the telencephalon. During postnatal stages of brain development is necessary for ependymal cell maturation by promoting the maturation of radial glia into ependymal cells through regulation of neuroblast proliferation and migration. Acts on the proliferation and differentiation of neural progenitor cells through activating transcription of CCND1 and CCND2. During early lens formation plays a role in lens induction and specification by activating directly PAX6 in the presumptive lens ectoderm. In turn PAX6 activates SIX3 resulting in activation of PDGFRA and CCND1 promoting cell proliferation. Also is required for the neuroretina development by directly suppressing WNT8B expression in the anterior neural plate territory. Its action during retina development and lens morphogenesis is AES and TLE4-dependent manner. Furthermore, during eye development regulates several genes expression. Before and during early lens development represses the CRYGF promoter by binding a SIX repressor element. Directly activates RHO transcription, or cooperates with CRX or NRL. Six3 also functions in the formation of the proximodistal axis of the optic cup, and promotes the formation of optic vesicles-like structures. During pituitary development, acts in parallel or alternatively with HESX1 to control cell proliferation through Wnt/beta-catenin pathway. Plays a role in eye development by suppressing WNT1 expression and in dorsal-ventral patterning by repressing BMP signaling pathway.</text>
</comment>
<comment type="subunit">
    <text evidence="6">Interacts with GMNN.</text>
</comment>
<comment type="subcellular location">
    <subcellularLocation>
        <location evidence="3 4">Nucleus</location>
    </subcellularLocation>
</comment>
<comment type="similarity">
    <text evidence="7">Belongs to the SIX/Sine oculis homeobox family.</text>
</comment>
<evidence type="ECO:0000250" key="1">
    <source>
        <dbReference type="UniProtKB" id="O42406"/>
    </source>
</evidence>
<evidence type="ECO:0000250" key="2">
    <source>
        <dbReference type="UniProtKB" id="O95343"/>
    </source>
</evidence>
<evidence type="ECO:0000250" key="3">
    <source>
        <dbReference type="UniProtKB" id="Q62233"/>
    </source>
</evidence>
<evidence type="ECO:0000255" key="4">
    <source>
        <dbReference type="PROSITE-ProRule" id="PRU00108"/>
    </source>
</evidence>
<evidence type="ECO:0000256" key="5">
    <source>
        <dbReference type="SAM" id="MobiDB-lite"/>
    </source>
</evidence>
<evidence type="ECO:0000269" key="6">
    <source>
    </source>
</evidence>
<evidence type="ECO:0000305" key="7"/>